<reference key="1">
    <citation type="journal article" date="1999" name="Science">
        <title>Genome sequence of the radioresistant bacterium Deinococcus radiodurans R1.</title>
        <authorList>
            <person name="White O."/>
            <person name="Eisen J.A."/>
            <person name="Heidelberg J.F."/>
            <person name="Hickey E.K."/>
            <person name="Peterson J.D."/>
            <person name="Dodson R.J."/>
            <person name="Haft D.H."/>
            <person name="Gwinn M.L."/>
            <person name="Nelson W.C."/>
            <person name="Richardson D.L."/>
            <person name="Moffat K.S."/>
            <person name="Qin H."/>
            <person name="Jiang L."/>
            <person name="Pamphile W."/>
            <person name="Crosby M."/>
            <person name="Shen M."/>
            <person name="Vamathevan J.J."/>
            <person name="Lam P."/>
            <person name="McDonald L.A."/>
            <person name="Utterback T.R."/>
            <person name="Zalewski C."/>
            <person name="Makarova K.S."/>
            <person name="Aravind L."/>
            <person name="Daly M.J."/>
            <person name="Minton K.W."/>
            <person name="Fleischmann R.D."/>
            <person name="Ketchum K.A."/>
            <person name="Nelson K.E."/>
            <person name="Salzberg S.L."/>
            <person name="Smith H.O."/>
            <person name="Venter J.C."/>
            <person name="Fraser C.M."/>
        </authorList>
    </citation>
    <scope>NUCLEOTIDE SEQUENCE [LARGE SCALE GENOMIC DNA]</scope>
    <source>
        <strain>ATCC 13939 / DSM 20539 / JCM 16871 / CCUG 27074 / LMG 4051 / NBRC 15346 / NCIMB 9279 / VKM B-1422 / R1</strain>
    </source>
</reference>
<gene>
    <name type="ordered locus">DR_0006</name>
</gene>
<evidence type="ECO:0000255" key="1">
    <source>
        <dbReference type="HAMAP-Rule" id="MF_00457"/>
    </source>
</evidence>
<evidence type="ECO:0000305" key="2"/>
<comment type="similarity">
    <text evidence="1">Belongs to the UPF0173 family.</text>
</comment>
<comment type="sequence caution" evidence="2">
    <conflict type="erroneous initiation">
        <sequence resource="EMBL-CDS" id="AAF09599"/>
    </conflict>
</comment>
<dbReference type="EMBL" id="AE000513">
    <property type="protein sequence ID" value="AAF09599.1"/>
    <property type="status" value="ALT_INIT"/>
    <property type="molecule type" value="Genomic_DNA"/>
</dbReference>
<dbReference type="PIR" id="A75572">
    <property type="entry name" value="A75572"/>
</dbReference>
<dbReference type="RefSeq" id="NP_293732.1">
    <property type="nucleotide sequence ID" value="NC_001263.1"/>
</dbReference>
<dbReference type="RefSeq" id="WP_027480256.1">
    <property type="nucleotide sequence ID" value="NC_001263.1"/>
</dbReference>
<dbReference type="SMR" id="Q9RYE3"/>
<dbReference type="FunCoup" id="Q9RYE3">
    <property type="interactions" value="34"/>
</dbReference>
<dbReference type="STRING" id="243230.DR_0006"/>
<dbReference type="PaxDb" id="243230-DR_0006"/>
<dbReference type="EnsemblBacteria" id="AAF09599">
    <property type="protein sequence ID" value="AAF09599"/>
    <property type="gene ID" value="DR_0006"/>
</dbReference>
<dbReference type="GeneID" id="69516233"/>
<dbReference type="KEGG" id="dra:DR_0006"/>
<dbReference type="PATRIC" id="fig|243230.17.peg.171"/>
<dbReference type="eggNOG" id="COG2220">
    <property type="taxonomic scope" value="Bacteria"/>
</dbReference>
<dbReference type="HOGENOM" id="CLU_070010_4_0_0"/>
<dbReference type="InParanoid" id="Q9RYE3"/>
<dbReference type="OrthoDB" id="9789133at2"/>
<dbReference type="Proteomes" id="UP000002524">
    <property type="component" value="Chromosome 1"/>
</dbReference>
<dbReference type="GO" id="GO:0016787">
    <property type="term" value="F:hydrolase activity"/>
    <property type="evidence" value="ECO:0000318"/>
    <property type="project" value="GO_Central"/>
</dbReference>
<dbReference type="Gene3D" id="3.60.15.10">
    <property type="entry name" value="Ribonuclease Z/Hydroxyacylglutathione hydrolase-like"/>
    <property type="match status" value="1"/>
</dbReference>
<dbReference type="HAMAP" id="MF_00457">
    <property type="entry name" value="UPF0173"/>
    <property type="match status" value="1"/>
</dbReference>
<dbReference type="InterPro" id="IPR001279">
    <property type="entry name" value="Metallo-B-lactamas"/>
</dbReference>
<dbReference type="InterPro" id="IPR036866">
    <property type="entry name" value="RibonucZ/Hydroxyglut_hydro"/>
</dbReference>
<dbReference type="InterPro" id="IPR022877">
    <property type="entry name" value="UPF0173"/>
</dbReference>
<dbReference type="InterPro" id="IPR050114">
    <property type="entry name" value="UPF0173_UPF0282_UlaG_hydrolase"/>
</dbReference>
<dbReference type="NCBIfam" id="NF001911">
    <property type="entry name" value="PRK00685.1"/>
    <property type="match status" value="1"/>
</dbReference>
<dbReference type="PANTHER" id="PTHR43546:SF3">
    <property type="entry name" value="UPF0173 METAL-DEPENDENT HYDROLASE MJ1163"/>
    <property type="match status" value="1"/>
</dbReference>
<dbReference type="PANTHER" id="PTHR43546">
    <property type="entry name" value="UPF0173 METAL-DEPENDENT HYDROLASE MJ1163-RELATED"/>
    <property type="match status" value="1"/>
</dbReference>
<dbReference type="Pfam" id="PF12706">
    <property type="entry name" value="Lactamase_B_2"/>
    <property type="match status" value="1"/>
</dbReference>
<dbReference type="SMART" id="SM00849">
    <property type="entry name" value="Lactamase_B"/>
    <property type="match status" value="1"/>
</dbReference>
<dbReference type="SUPFAM" id="SSF56281">
    <property type="entry name" value="Metallo-hydrolase/oxidoreductase"/>
    <property type="match status" value="1"/>
</dbReference>
<proteinExistence type="inferred from homology"/>
<feature type="chain" id="PRO_0000156374" description="UPF0173 metal-dependent hydrolase DR_0006">
    <location>
        <begin position="1"/>
        <end position="227"/>
    </location>
</feature>
<sequence length="227" mass="24489">MLKIRSLGHSTFFLDDGTHRLLIEPFLEGNPRCPVTLGEVQSWQPSAVLISHAHGDHWGNALDFGRAGVPIIATAEIAGYAGAHGANNAVGMNIGGTYRAEWGSVSLTPAWHSSSFPDGTYGGMPTGLVIEFGGQRLYFAGDTALFSDMRLIGDRELDLAFLPIGDHYTMGPEEAGRTLDLLRPRVAIPMHYATFPALTGDPAVFRTEGERRGVEVRVLDPGETTEL</sequence>
<keyword id="KW-0378">Hydrolase</keyword>
<keyword id="KW-1185">Reference proteome</keyword>
<organism>
    <name type="scientific">Deinococcus radiodurans (strain ATCC 13939 / DSM 20539 / JCM 16871 / CCUG 27074 / LMG 4051 / NBRC 15346 / NCIMB 9279 / VKM B-1422 / R1)</name>
    <dbReference type="NCBI Taxonomy" id="243230"/>
    <lineage>
        <taxon>Bacteria</taxon>
        <taxon>Thermotogati</taxon>
        <taxon>Deinococcota</taxon>
        <taxon>Deinococci</taxon>
        <taxon>Deinococcales</taxon>
        <taxon>Deinococcaceae</taxon>
        <taxon>Deinococcus</taxon>
    </lineage>
</organism>
<name>Y006_DEIRA</name>
<protein>
    <recommendedName>
        <fullName evidence="1">UPF0173 metal-dependent hydrolase DR_0006</fullName>
    </recommendedName>
</protein>
<accession>Q9RYE3</accession>